<name>ENL02_ARATH</name>
<feature type="signal peptide" evidence="1">
    <location>
        <begin position="1"/>
        <end position="28"/>
    </location>
</feature>
<feature type="chain" id="PRO_0000002880" description="Early nodulin-like protein 2">
    <location>
        <begin position="29"/>
        <end position="325"/>
    </location>
</feature>
<feature type="propeptide" id="PRO_0000002881" description="Removed in mature form" evidence="1">
    <location>
        <begin position="326"/>
        <end position="349"/>
    </location>
</feature>
<feature type="domain" description="Phytocyanin" evidence="2">
    <location>
        <begin position="29"/>
        <end position="130"/>
    </location>
</feature>
<feature type="region of interest" description="Disordered" evidence="3">
    <location>
        <begin position="136"/>
        <end position="330"/>
    </location>
</feature>
<feature type="compositionally biased region" description="Low complexity" evidence="3">
    <location>
        <begin position="145"/>
        <end position="201"/>
    </location>
</feature>
<feature type="compositionally biased region" description="Low complexity" evidence="3">
    <location>
        <begin position="224"/>
        <end position="234"/>
    </location>
</feature>
<feature type="compositionally biased region" description="Polar residues" evidence="3">
    <location>
        <begin position="249"/>
        <end position="260"/>
    </location>
</feature>
<feature type="compositionally biased region" description="Low complexity" evidence="3">
    <location>
        <begin position="263"/>
        <end position="312"/>
    </location>
</feature>
<feature type="lipid moiety-binding region" description="GPI-anchor amidated serine" evidence="1">
    <location>
        <position position="325"/>
    </location>
</feature>
<feature type="disulfide bond" evidence="2">
    <location>
        <begin position="84"/>
        <end position="118"/>
    </location>
</feature>
<sequence>MTFLKMKSLSFFFTILLSLSTLFTISNARKFNVGGSGAWVTNPPENYESWSGKNRFLVHDTLYFSYAKGADSVLEVNKADYDACNTKNPIKRVDDGDSEISLDRYGPFYFISGNEDNCKKGQKLNVVVISARIPSTAQSPHAAAPGSSTPGSMTPPGGAHSPKSSSPVSPTTSPPGSTTPPGGAHSPKSSSAVSPATSPPGSMAPKSGSPVSPTTSPPAPPKSTSPVSPSSAPMTSPPAPMAPKSSSTIPPSSAPMTSPPGSMAPKSSSPVSNSPTVSPSLAPGGSTSSSPSDSPSGSAMGPSGDGPSAAGDISTPAGAPGQKKSSANGMTVMSITTVLSLVLTIFLSA</sequence>
<evidence type="ECO:0000255" key="1"/>
<evidence type="ECO:0000255" key="2">
    <source>
        <dbReference type="PROSITE-ProRule" id="PRU00818"/>
    </source>
</evidence>
<evidence type="ECO:0000256" key="3">
    <source>
        <dbReference type="SAM" id="MobiDB-lite"/>
    </source>
</evidence>
<evidence type="ECO:0000269" key="4">
    <source>
    </source>
</evidence>
<evidence type="ECO:0000269" key="5">
    <source>
    </source>
</evidence>
<evidence type="ECO:0000269" key="6">
    <source>
    </source>
</evidence>
<evidence type="ECO:0000303" key="7">
    <source>
    </source>
</evidence>
<evidence type="ECO:0000303" key="8">
    <source>
    </source>
</evidence>
<evidence type="ECO:0000303" key="9">
    <source>
    </source>
</evidence>
<evidence type="ECO:0000305" key="10"/>
<evidence type="ECO:0000312" key="11">
    <source>
        <dbReference type="Araport" id="AT4G27520"/>
    </source>
</evidence>
<evidence type="ECO:0000312" key="12">
    <source>
        <dbReference type="EMBL" id="CAB38264.1"/>
    </source>
</evidence>
<reference key="1">
    <citation type="submission" date="1998-08" db="EMBL/GenBank/DDBJ databases">
        <title>Signal peptide selection derived cDNAs from Arabidopsis thaliana leaves and guard cells.</title>
        <authorList>
            <person name="Stracke R."/>
            <person name="Palme K."/>
        </authorList>
    </citation>
    <scope>NUCLEOTIDE SEQUENCE [LARGE SCALE MRNA]</scope>
</reference>
<reference key="2">
    <citation type="journal article" date="1999" name="Nature">
        <title>Sequence and analysis of chromosome 4 of the plant Arabidopsis thaliana.</title>
        <authorList>
            <person name="Mayer K.F.X."/>
            <person name="Schueller C."/>
            <person name="Wambutt R."/>
            <person name="Murphy G."/>
            <person name="Volckaert G."/>
            <person name="Pohl T."/>
            <person name="Duesterhoeft A."/>
            <person name="Stiekema W."/>
            <person name="Entian K.-D."/>
            <person name="Terryn N."/>
            <person name="Harris B."/>
            <person name="Ansorge W."/>
            <person name="Brandt P."/>
            <person name="Grivell L.A."/>
            <person name="Rieger M."/>
            <person name="Weichselgartner M."/>
            <person name="de Simone V."/>
            <person name="Obermaier B."/>
            <person name="Mache R."/>
            <person name="Mueller M."/>
            <person name="Kreis M."/>
            <person name="Delseny M."/>
            <person name="Puigdomenech P."/>
            <person name="Watson M."/>
            <person name="Schmidtheini T."/>
            <person name="Reichert B."/>
            <person name="Portetelle D."/>
            <person name="Perez-Alonso M."/>
            <person name="Boutry M."/>
            <person name="Bancroft I."/>
            <person name="Vos P."/>
            <person name="Hoheisel J."/>
            <person name="Zimmermann W."/>
            <person name="Wedler H."/>
            <person name="Ridley P."/>
            <person name="Langham S.-A."/>
            <person name="McCullagh B."/>
            <person name="Bilham L."/>
            <person name="Robben J."/>
            <person name="van der Schueren J."/>
            <person name="Grymonprez B."/>
            <person name="Chuang Y.-J."/>
            <person name="Vandenbussche F."/>
            <person name="Braeken M."/>
            <person name="Weltjens I."/>
            <person name="Voet M."/>
            <person name="Bastiaens I."/>
            <person name="Aert R."/>
            <person name="Defoor E."/>
            <person name="Weitzenegger T."/>
            <person name="Bothe G."/>
            <person name="Ramsperger U."/>
            <person name="Hilbert H."/>
            <person name="Braun M."/>
            <person name="Holzer E."/>
            <person name="Brandt A."/>
            <person name="Peters S."/>
            <person name="van Staveren M."/>
            <person name="Dirkse W."/>
            <person name="Mooijman P."/>
            <person name="Klein Lankhorst R."/>
            <person name="Rose M."/>
            <person name="Hauf J."/>
            <person name="Koetter P."/>
            <person name="Berneiser S."/>
            <person name="Hempel S."/>
            <person name="Feldpausch M."/>
            <person name="Lamberth S."/>
            <person name="Van den Daele H."/>
            <person name="De Keyser A."/>
            <person name="Buysshaert C."/>
            <person name="Gielen J."/>
            <person name="Villarroel R."/>
            <person name="De Clercq R."/>
            <person name="van Montagu M."/>
            <person name="Rogers J."/>
            <person name="Cronin A."/>
            <person name="Quail M.A."/>
            <person name="Bray-Allen S."/>
            <person name="Clark L."/>
            <person name="Doggett J."/>
            <person name="Hall S."/>
            <person name="Kay M."/>
            <person name="Lennard N."/>
            <person name="McLay K."/>
            <person name="Mayes R."/>
            <person name="Pettett A."/>
            <person name="Rajandream M.A."/>
            <person name="Lyne M."/>
            <person name="Benes V."/>
            <person name="Rechmann S."/>
            <person name="Borkova D."/>
            <person name="Bloecker H."/>
            <person name="Scharfe M."/>
            <person name="Grimm M."/>
            <person name="Loehnert T.-H."/>
            <person name="Dose S."/>
            <person name="de Haan M."/>
            <person name="Maarse A.C."/>
            <person name="Schaefer M."/>
            <person name="Mueller-Auer S."/>
            <person name="Gabel C."/>
            <person name="Fuchs M."/>
            <person name="Fartmann B."/>
            <person name="Granderath K."/>
            <person name="Dauner D."/>
            <person name="Herzl A."/>
            <person name="Neumann S."/>
            <person name="Argiriou A."/>
            <person name="Vitale D."/>
            <person name="Liguori R."/>
            <person name="Piravandi E."/>
            <person name="Massenet O."/>
            <person name="Quigley F."/>
            <person name="Clabauld G."/>
            <person name="Muendlein A."/>
            <person name="Felber R."/>
            <person name="Schnabl S."/>
            <person name="Hiller R."/>
            <person name="Schmidt W."/>
            <person name="Lecharny A."/>
            <person name="Aubourg S."/>
            <person name="Chefdor F."/>
            <person name="Cooke R."/>
            <person name="Berger C."/>
            <person name="Monfort A."/>
            <person name="Casacuberta E."/>
            <person name="Gibbons T."/>
            <person name="Weber N."/>
            <person name="Vandenbol M."/>
            <person name="Bargues M."/>
            <person name="Terol J."/>
            <person name="Torres A."/>
            <person name="Perez-Perez A."/>
            <person name="Purnelle B."/>
            <person name="Bent E."/>
            <person name="Johnson S."/>
            <person name="Tacon D."/>
            <person name="Jesse T."/>
            <person name="Heijnen L."/>
            <person name="Schwarz S."/>
            <person name="Scholler P."/>
            <person name="Heber S."/>
            <person name="Francs P."/>
            <person name="Bielke C."/>
            <person name="Frishman D."/>
            <person name="Haase D."/>
            <person name="Lemcke K."/>
            <person name="Mewes H.-W."/>
            <person name="Stocker S."/>
            <person name="Zaccaria P."/>
            <person name="Bevan M."/>
            <person name="Wilson R.K."/>
            <person name="de la Bastide M."/>
            <person name="Habermann K."/>
            <person name="Parnell L."/>
            <person name="Dedhia N."/>
            <person name="Gnoj L."/>
            <person name="Schutz K."/>
            <person name="Huang E."/>
            <person name="Spiegel L."/>
            <person name="Sekhon M."/>
            <person name="Murray J."/>
            <person name="Sheet P."/>
            <person name="Cordes M."/>
            <person name="Abu-Threideh J."/>
            <person name="Stoneking T."/>
            <person name="Kalicki J."/>
            <person name="Graves T."/>
            <person name="Harmon G."/>
            <person name="Edwards J."/>
            <person name="Latreille P."/>
            <person name="Courtney L."/>
            <person name="Cloud J."/>
            <person name="Abbott A."/>
            <person name="Scott K."/>
            <person name="Johnson D."/>
            <person name="Minx P."/>
            <person name="Bentley D."/>
            <person name="Fulton B."/>
            <person name="Miller N."/>
            <person name="Greco T."/>
            <person name="Kemp K."/>
            <person name="Kramer J."/>
            <person name="Fulton L."/>
            <person name="Mardis E."/>
            <person name="Dante M."/>
            <person name="Pepin K."/>
            <person name="Hillier L.W."/>
            <person name="Nelson J."/>
            <person name="Spieth J."/>
            <person name="Ryan E."/>
            <person name="Andrews S."/>
            <person name="Geisel C."/>
            <person name="Layman D."/>
            <person name="Du H."/>
            <person name="Ali J."/>
            <person name="Berghoff A."/>
            <person name="Jones K."/>
            <person name="Drone K."/>
            <person name="Cotton M."/>
            <person name="Joshu C."/>
            <person name="Antonoiu B."/>
            <person name="Zidanic M."/>
            <person name="Strong C."/>
            <person name="Sun H."/>
            <person name="Lamar B."/>
            <person name="Yordan C."/>
            <person name="Ma P."/>
            <person name="Zhong J."/>
            <person name="Preston R."/>
            <person name="Vil D."/>
            <person name="Shekher M."/>
            <person name="Matero A."/>
            <person name="Shah R."/>
            <person name="Swaby I.K."/>
            <person name="O'Shaughnessy A."/>
            <person name="Rodriguez M."/>
            <person name="Hoffman J."/>
            <person name="Till S."/>
            <person name="Granat S."/>
            <person name="Shohdy N."/>
            <person name="Hasegawa A."/>
            <person name="Hameed A."/>
            <person name="Lodhi M."/>
            <person name="Johnson A."/>
            <person name="Chen E."/>
            <person name="Marra M.A."/>
            <person name="Martienssen R."/>
            <person name="McCombie W.R."/>
        </authorList>
    </citation>
    <scope>NUCLEOTIDE SEQUENCE [LARGE SCALE GENOMIC DNA]</scope>
    <source>
        <strain>cv. Columbia</strain>
    </source>
</reference>
<reference key="3">
    <citation type="journal article" date="2017" name="Plant J.">
        <title>Araport11: a complete reannotation of the Arabidopsis thaliana reference genome.</title>
        <authorList>
            <person name="Cheng C.Y."/>
            <person name="Krishnakumar V."/>
            <person name="Chan A.P."/>
            <person name="Thibaud-Nissen F."/>
            <person name="Schobel S."/>
            <person name="Town C.D."/>
        </authorList>
    </citation>
    <scope>GENOME REANNOTATION</scope>
    <source>
        <strain>cv. Columbia</strain>
    </source>
</reference>
<reference key="4">
    <citation type="journal article" date="2003" name="Science">
        <title>Empirical analysis of transcriptional activity in the Arabidopsis genome.</title>
        <authorList>
            <person name="Yamada K."/>
            <person name="Lim J."/>
            <person name="Dale J.M."/>
            <person name="Chen H."/>
            <person name="Shinn P."/>
            <person name="Palm C.J."/>
            <person name="Southwick A.M."/>
            <person name="Wu H.C."/>
            <person name="Kim C.J."/>
            <person name="Nguyen M."/>
            <person name="Pham P.K."/>
            <person name="Cheuk R.F."/>
            <person name="Karlin-Newmann G."/>
            <person name="Liu S.X."/>
            <person name="Lam B."/>
            <person name="Sakano H."/>
            <person name="Wu T."/>
            <person name="Yu G."/>
            <person name="Miranda M."/>
            <person name="Quach H.L."/>
            <person name="Tripp M."/>
            <person name="Chang C.H."/>
            <person name="Lee J.M."/>
            <person name="Toriumi M.J."/>
            <person name="Chan M.M."/>
            <person name="Tang C.C."/>
            <person name="Onodera C.S."/>
            <person name="Deng J.M."/>
            <person name="Akiyama K."/>
            <person name="Ansari Y."/>
            <person name="Arakawa T."/>
            <person name="Banh J."/>
            <person name="Banno F."/>
            <person name="Bowser L."/>
            <person name="Brooks S.Y."/>
            <person name="Carninci P."/>
            <person name="Chao Q."/>
            <person name="Choy N."/>
            <person name="Enju A."/>
            <person name="Goldsmith A.D."/>
            <person name="Gurjal M."/>
            <person name="Hansen N.F."/>
            <person name="Hayashizaki Y."/>
            <person name="Johnson-Hopson C."/>
            <person name="Hsuan V.W."/>
            <person name="Iida K."/>
            <person name="Karnes M."/>
            <person name="Khan S."/>
            <person name="Koesema E."/>
            <person name="Ishida J."/>
            <person name="Jiang P.X."/>
            <person name="Jones T."/>
            <person name="Kawai J."/>
            <person name="Kamiya A."/>
            <person name="Meyers C."/>
            <person name="Nakajima M."/>
            <person name="Narusaka M."/>
            <person name="Seki M."/>
            <person name="Sakurai T."/>
            <person name="Satou M."/>
            <person name="Tamse R."/>
            <person name="Vaysberg M."/>
            <person name="Wallender E.K."/>
            <person name="Wong C."/>
            <person name="Yamamura Y."/>
            <person name="Yuan S."/>
            <person name="Shinozaki K."/>
            <person name="Davis R.W."/>
            <person name="Theologis A."/>
            <person name="Ecker J.R."/>
        </authorList>
    </citation>
    <scope>NUCLEOTIDE SEQUENCE [LARGE SCALE MRNA]</scope>
    <source>
        <strain>cv. Columbia</strain>
    </source>
</reference>
<reference key="5">
    <citation type="submission" date="2002-03" db="EMBL/GenBank/DDBJ databases">
        <title>Full-length cDNA from Arabidopsis thaliana.</title>
        <authorList>
            <person name="Brover V.V."/>
            <person name="Troukhan M.E."/>
            <person name="Alexandrov N.A."/>
            <person name="Lu Y.-P."/>
            <person name="Flavell R.B."/>
            <person name="Feldmann K.A."/>
        </authorList>
    </citation>
    <scope>NUCLEOTIDE SEQUENCE [LARGE SCALE MRNA]</scope>
</reference>
<reference key="6">
    <citation type="submission" date="2004-12" db="EMBL/GenBank/DDBJ databases">
        <title>Arabidopsis ORF clones.</title>
        <authorList>
            <person name="Cheuk R.F."/>
            <person name="Chen H."/>
            <person name="Kim C.J."/>
            <person name="Shinn P."/>
            <person name="Ecker J.R."/>
        </authorList>
    </citation>
    <scope>NUCLEOTIDE SEQUENCE [LARGE SCALE MRNA]</scope>
    <source>
        <strain>cv. Columbia</strain>
    </source>
</reference>
<reference key="7">
    <citation type="journal article" date="2003" name="Mol. Cell. Proteomics">
        <title>Proteomic analysis of glycosylphosphatidylinositol-anchored membrane proteins.</title>
        <authorList>
            <person name="Elortza F."/>
            <person name="Nuehse T.S."/>
            <person name="Foster L.J."/>
            <person name="Stensballe A."/>
            <person name="Peck S.C."/>
            <person name="Jensen O.N."/>
        </authorList>
    </citation>
    <scope>IDENTIFICATION BY MASS SPECTROMETRY</scope>
    <scope>GPI-ANCHOR [LARGE SCALE ANALYSIS]</scope>
</reference>
<reference key="8">
    <citation type="journal article" date="2003" name="Plant Physiol.">
        <title>Identification of glycosylphosphatidylinositol-anchored proteins in Arabidopsis. A proteomic and genomic analysis.</title>
        <authorList>
            <person name="Borner G.H.H."/>
            <person name="Lilley K.S."/>
            <person name="Stevens T.J."/>
            <person name="Dupree P."/>
        </authorList>
    </citation>
    <scope>GPI-ANCHOR</scope>
    <scope>IDENTIFICATION BY MASS SPECTROMETRY</scope>
    <scope>GENE FAMILY</scope>
    <source>
        <strain>cv. Columbia</strain>
    </source>
</reference>
<reference key="9">
    <citation type="journal article" date="2009" name="Biosci. Biotechnol. Biochem.">
        <title>Genome-wide identification, structure and expression studies, and mutant collection of 22 early nodulin-like protein genes in Arabidopsis.</title>
        <authorList>
            <person name="Mashiguchi K."/>
            <person name="Asami T."/>
            <person name="Suzuki Y."/>
        </authorList>
    </citation>
    <scope>TISSUE SPECIFICITY</scope>
    <scope>GENE FAMILY</scope>
    <scope>NOMENCLATURE</scope>
    <source>
        <strain>cv. Columbia</strain>
    </source>
</reference>
<reference key="10">
    <citation type="journal article" date="2014" name="Plant Cell Physiol.">
        <title>Emerging functions of nodulin-like proteins in non-nodulating plant species.</title>
        <authorList>
            <person name="Denance N."/>
            <person name="Szurek B."/>
            <person name="Noel L.D."/>
        </authorList>
    </citation>
    <scope>REVIEW ON NODULIN-LIKE PROTEINS</scope>
</reference>
<keyword id="KW-1003">Cell membrane</keyword>
<keyword id="KW-1015">Disulfide bond</keyword>
<keyword id="KW-0325">Glycoprotein</keyword>
<keyword id="KW-0336">GPI-anchor</keyword>
<keyword id="KW-0449">Lipoprotein</keyword>
<keyword id="KW-0472">Membrane</keyword>
<keyword id="KW-1185">Reference proteome</keyword>
<keyword id="KW-0732">Signal</keyword>
<proteinExistence type="evidence at protein level"/>
<gene>
    <name evidence="8" type="primary">ENODL2</name>
    <name evidence="8" type="synonym">EN2</name>
    <name evidence="11" type="ordered locus">At4g27520</name>
    <name evidence="12" type="ORF">T29A15.10</name>
</gene>
<protein>
    <recommendedName>
        <fullName evidence="7 8">Early nodulin-like protein 2</fullName>
        <shortName evidence="8">AtENODL2</shortName>
    </recommendedName>
    <alternativeName>
        <fullName evidence="10">Phytocyanin-like protein ENODL2</fullName>
    </alternativeName>
</protein>
<accession>Q9T076</accession>
<accession>Q5PNT5</accession>
<accession>Q8LBE5</accession>
<comment type="function">
    <text evidence="9">May act as a carbohydrate transporter.</text>
</comment>
<comment type="subcellular location">
    <subcellularLocation>
        <location evidence="1">Cell membrane</location>
        <topology evidence="4 5">Lipid-anchor</topology>
        <topology evidence="4 5">GPI-anchor</topology>
    </subcellularLocation>
</comment>
<comment type="tissue specificity">
    <text evidence="6">Mostly expressed in leaves and roots, and, to a lower extent, in seedlings, stems and flowers, but barely in seeds.</text>
</comment>
<comment type="similarity">
    <text evidence="10">Belongs to the early nodulin-like (ENODL) family.</text>
</comment>
<dbReference type="EMBL" id="AF083668">
    <property type="protein sequence ID" value="AAN60227.1"/>
    <property type="molecule type" value="mRNA"/>
</dbReference>
<dbReference type="EMBL" id="AL035602">
    <property type="protein sequence ID" value="CAB38264.1"/>
    <property type="molecule type" value="Genomic_DNA"/>
</dbReference>
<dbReference type="EMBL" id="AL161571">
    <property type="protein sequence ID" value="CAB81402.1"/>
    <property type="molecule type" value="Genomic_DNA"/>
</dbReference>
<dbReference type="EMBL" id="CP002687">
    <property type="protein sequence ID" value="AEE85353.1"/>
    <property type="molecule type" value="Genomic_DNA"/>
</dbReference>
<dbReference type="EMBL" id="AF325035">
    <property type="protein sequence ID" value="AAG40387.1"/>
    <property type="molecule type" value="mRNA"/>
</dbReference>
<dbReference type="EMBL" id="BT000767">
    <property type="protein sequence ID" value="AAN31906.1"/>
    <property type="molecule type" value="mRNA"/>
</dbReference>
<dbReference type="EMBL" id="AY087260">
    <property type="protein sequence ID" value="AAM64815.1"/>
    <property type="molecule type" value="mRNA"/>
</dbReference>
<dbReference type="EMBL" id="BT020362">
    <property type="protein sequence ID" value="AAV85717.1"/>
    <property type="molecule type" value="mRNA"/>
</dbReference>
<dbReference type="PIR" id="T05857">
    <property type="entry name" value="T05857"/>
</dbReference>
<dbReference type="RefSeq" id="NP_194482.1">
    <property type="nucleotide sequence ID" value="NM_118887.3"/>
</dbReference>
<dbReference type="SMR" id="Q9T076"/>
<dbReference type="BioGRID" id="14148">
    <property type="interactions" value="1"/>
</dbReference>
<dbReference type="FunCoup" id="Q9T076">
    <property type="interactions" value="52"/>
</dbReference>
<dbReference type="STRING" id="3702.Q9T076"/>
<dbReference type="GlyGen" id="Q9T076">
    <property type="glycosylation" value="3 sites"/>
</dbReference>
<dbReference type="iPTMnet" id="Q9T076"/>
<dbReference type="PaxDb" id="3702-AT4G27520.1"/>
<dbReference type="ProteomicsDB" id="220319"/>
<dbReference type="EnsemblPlants" id="AT4G27520.1">
    <property type="protein sequence ID" value="AT4G27520.1"/>
    <property type="gene ID" value="AT4G27520"/>
</dbReference>
<dbReference type="GeneID" id="828861"/>
<dbReference type="Gramene" id="AT4G27520.1">
    <property type="protein sequence ID" value="AT4G27520.1"/>
    <property type="gene ID" value="AT4G27520"/>
</dbReference>
<dbReference type="KEGG" id="ath:AT4G27520"/>
<dbReference type="Araport" id="AT4G27520"/>
<dbReference type="TAIR" id="AT4G27520">
    <property type="gene designation" value="ENODL2"/>
</dbReference>
<dbReference type="eggNOG" id="ENOG502RZ81">
    <property type="taxonomic scope" value="Eukaryota"/>
</dbReference>
<dbReference type="HOGENOM" id="CLU_058719_0_0_1"/>
<dbReference type="InParanoid" id="Q9T076"/>
<dbReference type="OMA" id="ENYESWS"/>
<dbReference type="PRO" id="PR:Q9T076"/>
<dbReference type="Proteomes" id="UP000006548">
    <property type="component" value="Chromosome 4"/>
</dbReference>
<dbReference type="ExpressionAtlas" id="Q9T076">
    <property type="expression patterns" value="baseline and differential"/>
</dbReference>
<dbReference type="GO" id="GO:0048046">
    <property type="term" value="C:apoplast"/>
    <property type="evidence" value="ECO:0007005"/>
    <property type="project" value="TAIR"/>
</dbReference>
<dbReference type="GO" id="GO:0009507">
    <property type="term" value="C:chloroplast"/>
    <property type="evidence" value="ECO:0007005"/>
    <property type="project" value="TAIR"/>
</dbReference>
<dbReference type="GO" id="GO:0005829">
    <property type="term" value="C:cytosol"/>
    <property type="evidence" value="ECO:0007005"/>
    <property type="project" value="TAIR"/>
</dbReference>
<dbReference type="GO" id="GO:0000325">
    <property type="term" value="C:plant-type vacuole"/>
    <property type="evidence" value="ECO:0007005"/>
    <property type="project" value="TAIR"/>
</dbReference>
<dbReference type="GO" id="GO:0005886">
    <property type="term" value="C:plasma membrane"/>
    <property type="evidence" value="ECO:0007005"/>
    <property type="project" value="TAIR"/>
</dbReference>
<dbReference type="GO" id="GO:0099503">
    <property type="term" value="C:secretory vesicle"/>
    <property type="evidence" value="ECO:0007005"/>
    <property type="project" value="TAIR"/>
</dbReference>
<dbReference type="GO" id="GO:0098552">
    <property type="term" value="C:side of membrane"/>
    <property type="evidence" value="ECO:0007669"/>
    <property type="project" value="UniProtKB-KW"/>
</dbReference>
<dbReference type="GO" id="GO:0009055">
    <property type="term" value="F:electron transfer activity"/>
    <property type="evidence" value="ECO:0007669"/>
    <property type="project" value="InterPro"/>
</dbReference>
<dbReference type="CDD" id="cd11019">
    <property type="entry name" value="OsENODL1_like"/>
    <property type="match status" value="1"/>
</dbReference>
<dbReference type="FunFam" id="2.60.40.420:FF:000010">
    <property type="entry name" value="Early nodulin-like protein 1"/>
    <property type="match status" value="1"/>
</dbReference>
<dbReference type="Gene3D" id="2.60.40.420">
    <property type="entry name" value="Cupredoxins - blue copper proteins"/>
    <property type="match status" value="1"/>
</dbReference>
<dbReference type="InterPro" id="IPR008972">
    <property type="entry name" value="Cupredoxin"/>
</dbReference>
<dbReference type="InterPro" id="IPR041846">
    <property type="entry name" value="ENL_dom"/>
</dbReference>
<dbReference type="InterPro" id="IPR039391">
    <property type="entry name" value="Phytocyanin-like"/>
</dbReference>
<dbReference type="InterPro" id="IPR003245">
    <property type="entry name" value="Phytocyanin_dom"/>
</dbReference>
<dbReference type="PANTHER" id="PTHR33021">
    <property type="entry name" value="BLUE COPPER PROTEIN"/>
    <property type="match status" value="1"/>
</dbReference>
<dbReference type="PANTHER" id="PTHR33021:SF449">
    <property type="entry name" value="EARLY NODULIN-LIKE PROTEIN 2"/>
    <property type="match status" value="1"/>
</dbReference>
<dbReference type="Pfam" id="PF02298">
    <property type="entry name" value="Cu_bind_like"/>
    <property type="match status" value="1"/>
</dbReference>
<dbReference type="SUPFAM" id="SSF49503">
    <property type="entry name" value="Cupredoxins"/>
    <property type="match status" value="1"/>
</dbReference>
<dbReference type="PROSITE" id="PS51485">
    <property type="entry name" value="PHYTOCYANIN"/>
    <property type="match status" value="1"/>
</dbReference>
<organism>
    <name type="scientific">Arabidopsis thaliana</name>
    <name type="common">Mouse-ear cress</name>
    <dbReference type="NCBI Taxonomy" id="3702"/>
    <lineage>
        <taxon>Eukaryota</taxon>
        <taxon>Viridiplantae</taxon>
        <taxon>Streptophyta</taxon>
        <taxon>Embryophyta</taxon>
        <taxon>Tracheophyta</taxon>
        <taxon>Spermatophyta</taxon>
        <taxon>Magnoliopsida</taxon>
        <taxon>eudicotyledons</taxon>
        <taxon>Gunneridae</taxon>
        <taxon>Pentapetalae</taxon>
        <taxon>rosids</taxon>
        <taxon>malvids</taxon>
        <taxon>Brassicales</taxon>
        <taxon>Brassicaceae</taxon>
        <taxon>Camelineae</taxon>
        <taxon>Arabidopsis</taxon>
    </lineage>
</organism>